<name>RL27_RHILW</name>
<comment type="similarity">
    <text evidence="1">Belongs to the bacterial ribosomal protein bL27 family.</text>
</comment>
<dbReference type="EMBL" id="CP001191">
    <property type="protein sequence ID" value="ACI57132.1"/>
    <property type="molecule type" value="Genomic_DNA"/>
</dbReference>
<dbReference type="RefSeq" id="WP_003543909.1">
    <property type="nucleotide sequence ID" value="NC_011369.1"/>
</dbReference>
<dbReference type="SMR" id="B5ZUD9"/>
<dbReference type="STRING" id="395492.Rleg2_3870"/>
<dbReference type="GeneID" id="84672330"/>
<dbReference type="KEGG" id="rlt:Rleg2_3870"/>
<dbReference type="eggNOG" id="COG0211">
    <property type="taxonomic scope" value="Bacteria"/>
</dbReference>
<dbReference type="HOGENOM" id="CLU_095424_4_1_5"/>
<dbReference type="Proteomes" id="UP000008330">
    <property type="component" value="Chromosome"/>
</dbReference>
<dbReference type="GO" id="GO:0022625">
    <property type="term" value="C:cytosolic large ribosomal subunit"/>
    <property type="evidence" value="ECO:0007669"/>
    <property type="project" value="TreeGrafter"/>
</dbReference>
<dbReference type="GO" id="GO:0003735">
    <property type="term" value="F:structural constituent of ribosome"/>
    <property type="evidence" value="ECO:0007669"/>
    <property type="project" value="InterPro"/>
</dbReference>
<dbReference type="GO" id="GO:0006412">
    <property type="term" value="P:translation"/>
    <property type="evidence" value="ECO:0007669"/>
    <property type="project" value="UniProtKB-UniRule"/>
</dbReference>
<dbReference type="FunFam" id="2.40.50.100:FF:000020">
    <property type="entry name" value="50S ribosomal protein L27"/>
    <property type="match status" value="1"/>
</dbReference>
<dbReference type="Gene3D" id="2.40.50.100">
    <property type="match status" value="1"/>
</dbReference>
<dbReference type="HAMAP" id="MF_00539">
    <property type="entry name" value="Ribosomal_bL27"/>
    <property type="match status" value="1"/>
</dbReference>
<dbReference type="InterPro" id="IPR001684">
    <property type="entry name" value="Ribosomal_bL27"/>
</dbReference>
<dbReference type="InterPro" id="IPR018261">
    <property type="entry name" value="Ribosomal_bL27_CS"/>
</dbReference>
<dbReference type="NCBIfam" id="TIGR00062">
    <property type="entry name" value="L27"/>
    <property type="match status" value="1"/>
</dbReference>
<dbReference type="PANTHER" id="PTHR15893:SF0">
    <property type="entry name" value="LARGE RIBOSOMAL SUBUNIT PROTEIN BL27M"/>
    <property type="match status" value="1"/>
</dbReference>
<dbReference type="PANTHER" id="PTHR15893">
    <property type="entry name" value="RIBOSOMAL PROTEIN L27"/>
    <property type="match status" value="1"/>
</dbReference>
<dbReference type="Pfam" id="PF01016">
    <property type="entry name" value="Ribosomal_L27"/>
    <property type="match status" value="1"/>
</dbReference>
<dbReference type="PRINTS" id="PR00063">
    <property type="entry name" value="RIBOSOMALL27"/>
</dbReference>
<dbReference type="SUPFAM" id="SSF110324">
    <property type="entry name" value="Ribosomal L27 protein-like"/>
    <property type="match status" value="1"/>
</dbReference>
<dbReference type="PROSITE" id="PS00831">
    <property type="entry name" value="RIBOSOMAL_L27"/>
    <property type="match status" value="1"/>
</dbReference>
<accession>B5ZUD9</accession>
<keyword id="KW-1185">Reference proteome</keyword>
<keyword id="KW-0687">Ribonucleoprotein</keyword>
<keyword id="KW-0689">Ribosomal protein</keyword>
<feature type="chain" id="PRO_1000128797" description="Large ribosomal subunit protein bL27">
    <location>
        <begin position="1"/>
        <end position="89"/>
    </location>
</feature>
<feature type="region of interest" description="Disordered" evidence="2">
    <location>
        <begin position="1"/>
        <end position="21"/>
    </location>
</feature>
<reference key="1">
    <citation type="journal article" date="2010" name="Stand. Genomic Sci.">
        <title>Complete genome sequence of Rhizobium leguminosarum bv trifolii strain WSM2304, an effective microsymbiont of the South American clover Trifolium polymorphum.</title>
        <authorList>
            <person name="Reeve W."/>
            <person name="O'Hara G."/>
            <person name="Chain P."/>
            <person name="Ardley J."/>
            <person name="Brau L."/>
            <person name="Nandesena K."/>
            <person name="Tiwari R."/>
            <person name="Malfatti S."/>
            <person name="Kiss H."/>
            <person name="Lapidus A."/>
            <person name="Copeland A."/>
            <person name="Nolan M."/>
            <person name="Land M."/>
            <person name="Ivanova N."/>
            <person name="Mavromatis K."/>
            <person name="Markowitz V."/>
            <person name="Kyrpides N."/>
            <person name="Melino V."/>
            <person name="Denton M."/>
            <person name="Yates R."/>
            <person name="Howieson J."/>
        </authorList>
    </citation>
    <scope>NUCLEOTIDE SEQUENCE [LARGE SCALE GENOMIC DNA]</scope>
    <source>
        <strain>WSM2304</strain>
    </source>
</reference>
<gene>
    <name evidence="1" type="primary">rpmA</name>
    <name type="ordered locus">Rleg2_3870</name>
</gene>
<proteinExistence type="inferred from homology"/>
<organism>
    <name type="scientific">Rhizobium leguminosarum bv. trifolii (strain WSM2304)</name>
    <dbReference type="NCBI Taxonomy" id="395492"/>
    <lineage>
        <taxon>Bacteria</taxon>
        <taxon>Pseudomonadati</taxon>
        <taxon>Pseudomonadota</taxon>
        <taxon>Alphaproteobacteria</taxon>
        <taxon>Hyphomicrobiales</taxon>
        <taxon>Rhizobiaceae</taxon>
        <taxon>Rhizobium/Agrobacterium group</taxon>
        <taxon>Rhizobium</taxon>
    </lineage>
</organism>
<evidence type="ECO:0000255" key="1">
    <source>
        <dbReference type="HAMAP-Rule" id="MF_00539"/>
    </source>
</evidence>
<evidence type="ECO:0000256" key="2">
    <source>
        <dbReference type="SAM" id="MobiDB-lite"/>
    </source>
</evidence>
<evidence type="ECO:0000305" key="3"/>
<sequence length="89" mass="9464">MAHKKAGGSSRNGRDSQSKRLGVKKFGGEAVIAGNIIVRQRGTEWHPGSNVGLGKDHTIFALTAGNVNYRTKANGRVYVSVMPKAEAAE</sequence>
<protein>
    <recommendedName>
        <fullName evidence="1">Large ribosomal subunit protein bL27</fullName>
    </recommendedName>
    <alternativeName>
        <fullName evidence="3">50S ribosomal protein L27</fullName>
    </alternativeName>
</protein>